<comment type="function">
    <text evidence="2">May affect virulence through inhibition of apoptosis.</text>
</comment>
<comment type="subcellular location">
    <subcellularLocation>
        <location evidence="4 5">Host Golgi apparatus membrane</location>
        <topology evidence="4 5">Multi-pass membrane protein</topology>
    </subcellularLocation>
</comment>
<comment type="similarity">
    <text evidence="3">Belongs to the BI1 family. LFG subfamily.</text>
</comment>
<proteinExistence type="evidence at protein level"/>
<name>GAAP_VACCL</name>
<sequence>MAMPSLSACSSIEDDFNYGSSVASASVHIRMAFLRKVYGILCLQFLLTTATTAVFLYFDCMRTFIQGSPVLILASMFGSIGLIFALTLHRHKHPLNLYLLCGFTLSESLTLASVVTFYDVHVVMQAFMLTTAAFLALTTYTLQSKRDFSKLGAGLFAALWILILSGLLGIFVQNETVKLVLSAFGALVFCGFIIYDTHSLIHKLSPEEYVLASINLYLDIINLFLHLLQLLEVSNKK</sequence>
<gene>
    <name type="primary">L6</name>
    <name type="ordered locus">List196</name>
</gene>
<dbReference type="EMBL" id="DQ121394">
    <property type="protein sequence ID" value="ABD52701.1"/>
    <property type="molecule type" value="Genomic_DNA"/>
</dbReference>
<dbReference type="EMBL" id="AY699305">
    <property type="protein sequence ID" value="AAW21698.1"/>
    <property type="molecule type" value="Genomic_DNA"/>
</dbReference>
<dbReference type="SMR" id="P0DXN1"/>
<dbReference type="Proteomes" id="UP000180811">
    <property type="component" value="Segment"/>
</dbReference>
<dbReference type="GO" id="GO:0044178">
    <property type="term" value="C:host cell Golgi membrane"/>
    <property type="evidence" value="ECO:0007669"/>
    <property type="project" value="UniProtKB-SubCell"/>
</dbReference>
<dbReference type="GO" id="GO:0016020">
    <property type="term" value="C:membrane"/>
    <property type="evidence" value="ECO:0007669"/>
    <property type="project" value="UniProtKB-KW"/>
</dbReference>
<dbReference type="GO" id="GO:0043066">
    <property type="term" value="P:negative regulation of apoptotic process"/>
    <property type="evidence" value="ECO:0007669"/>
    <property type="project" value="TreeGrafter"/>
</dbReference>
<dbReference type="InterPro" id="IPR006214">
    <property type="entry name" value="Bax_inhibitor_1-related"/>
</dbReference>
<dbReference type="PANTHER" id="PTHR23291">
    <property type="entry name" value="BAX INHIBITOR-RELATED"/>
    <property type="match status" value="1"/>
</dbReference>
<dbReference type="PANTHER" id="PTHR23291:SF50">
    <property type="entry name" value="PROTEIN LIFEGUARD 4"/>
    <property type="match status" value="1"/>
</dbReference>
<dbReference type="Pfam" id="PF01027">
    <property type="entry name" value="Bax1-I"/>
    <property type="match status" value="1"/>
</dbReference>
<reference key="1">
    <citation type="journal article" date="2007" name="J. Gen. Virol.">
        <title>Genomic sequence of a clonal isolate of the vaccinia virus Lister strain employed for smallpox vaccination in France and its comparison to other orthopoxviruses.</title>
        <authorList>
            <person name="Garcel A."/>
            <person name="Crance J.M."/>
            <person name="Drillien R."/>
            <person name="Garin D."/>
            <person name="Favier A.L."/>
        </authorList>
    </citation>
    <scope>NUCLEOTIDE SEQUENCE [LARGE SCALE GENOMIC DNA]</scope>
    <source>
        <strain>Lister</strain>
    </source>
</reference>
<reference key="2">
    <citation type="journal article" date="2007" name="PLoS Pathog.">
        <title>A new inhibitor of apoptosis from vaccinia virus and eukaryotes.</title>
        <authorList>
            <person name="Gubser C."/>
            <person name="Bergamaschi D."/>
            <person name="Hollinshead M."/>
            <person name="Lu X."/>
            <person name="van Kuppeveld F.J."/>
            <person name="Smith G.L."/>
        </authorList>
    </citation>
    <scope>NUCLEOTIDE SEQUENCE [GENOMIC DNA]</scope>
    <scope>FUNCTION</scope>
    <scope>SUBCELLULAR LOCATION</scope>
    <source>
        <strain>Lister</strain>
    </source>
</reference>
<reference key="3">
    <citation type="journal article" date="2012" name="J. Biol. Chem.">
        <title>Six-transmembrane topology for Golgi anti-apoptotic protein (GAAP) and Bax inhibitor 1 (BI-1) provides model for the transmembrane Bax inhibitor-containing motif (TMBIM) family.</title>
        <authorList>
            <person name="Carrara G."/>
            <person name="Saraiva N."/>
            <person name="Gubser C."/>
            <person name="Johnson B.F."/>
            <person name="Smith G.L."/>
        </authorList>
    </citation>
    <scope>SUBCELLULAR LOCATION</scope>
    <scope>TOPOLOGY</scope>
</reference>
<evidence type="ECO:0000255" key="1"/>
<evidence type="ECO:0000269" key="2">
    <source>
    </source>
</evidence>
<evidence type="ECO:0000305" key="3"/>
<evidence type="ECO:0000305" key="4">
    <source>
    </source>
</evidence>
<evidence type="ECO:0000305" key="5">
    <source>
    </source>
</evidence>
<organismHost>
    <name type="scientific">Homo sapiens</name>
    <name type="common">Human</name>
    <dbReference type="NCBI Taxonomy" id="9606"/>
</organismHost>
<accession>P0DXN1</accession>
<accession>Q49P94</accession>
<feature type="chain" id="PRO_0000418100" description="Golgi anti-apoptotic protein">
    <location>
        <begin position="1"/>
        <end position="237"/>
    </location>
</feature>
<feature type="topological domain" description="Cytoplasmic" evidence="1">
    <location>
        <begin position="1"/>
        <end position="37"/>
    </location>
</feature>
<feature type="transmembrane region" description="Helical" evidence="1">
    <location>
        <begin position="38"/>
        <end position="58"/>
    </location>
</feature>
<feature type="topological domain" description="Lumenal" evidence="1">
    <location>
        <begin position="59"/>
        <end position="67"/>
    </location>
</feature>
<feature type="transmembrane region" description="Helical" evidence="1">
    <location>
        <begin position="68"/>
        <end position="88"/>
    </location>
</feature>
<feature type="topological domain" description="Cytoplasmic" evidence="1">
    <location>
        <begin position="89"/>
        <end position="94"/>
    </location>
</feature>
<feature type="transmembrane region" description="Helical" evidence="1">
    <location>
        <begin position="95"/>
        <end position="115"/>
    </location>
</feature>
<feature type="topological domain" description="Lumenal" evidence="1">
    <location>
        <position position="116"/>
    </location>
</feature>
<feature type="transmembrane region" description="Helical" evidence="1">
    <location>
        <begin position="117"/>
        <end position="137"/>
    </location>
</feature>
<feature type="topological domain" description="Cytoplasmic" evidence="1">
    <location>
        <begin position="138"/>
        <end position="151"/>
    </location>
</feature>
<feature type="transmembrane region" description="Helical" evidence="1">
    <location>
        <begin position="152"/>
        <end position="172"/>
    </location>
</feature>
<feature type="topological domain" description="Lumenal" evidence="1">
    <location>
        <begin position="173"/>
        <end position="174"/>
    </location>
</feature>
<feature type="transmembrane region" description="Helical" evidence="1">
    <location>
        <begin position="175"/>
        <end position="195"/>
    </location>
</feature>
<feature type="topological domain" description="Cytoplasmic" evidence="1">
    <location>
        <begin position="196"/>
        <end position="209"/>
    </location>
</feature>
<feature type="intramembrane region" description="Helical" evidence="1">
    <location>
        <begin position="210"/>
        <end position="230"/>
    </location>
</feature>
<feature type="topological domain" description="Cytoplasmic" evidence="1">
    <location>
        <begin position="231"/>
        <end position="237"/>
    </location>
</feature>
<keyword id="KW-0053">Apoptosis</keyword>
<keyword id="KW-1040">Host Golgi apparatus</keyword>
<keyword id="KW-1043">Host membrane</keyword>
<keyword id="KW-0472">Membrane</keyword>
<keyword id="KW-0812">Transmembrane</keyword>
<keyword id="KW-1133">Transmembrane helix</keyword>
<protein>
    <recommendedName>
        <fullName>Golgi anti-apoptotic protein</fullName>
        <shortName>GAAP</shortName>
    </recommendedName>
</protein>
<organism>
    <name type="scientific">Vaccinia virus (strain Lister)</name>
    <name type="common">VACV</name>
    <dbReference type="NCBI Taxonomy" id="10252"/>
    <lineage>
        <taxon>Viruses</taxon>
        <taxon>Varidnaviria</taxon>
        <taxon>Bamfordvirae</taxon>
        <taxon>Nucleocytoviricota</taxon>
        <taxon>Pokkesviricetes</taxon>
        <taxon>Chitovirales</taxon>
        <taxon>Poxviridae</taxon>
        <taxon>Chordopoxvirinae</taxon>
        <taxon>Orthopoxvirus</taxon>
        <taxon>Vaccinia virus</taxon>
    </lineage>
</organism>